<protein>
    <recommendedName>
        <fullName evidence="1 8">Inner membrane-spanning protein YciB</fullName>
    </recommendedName>
</protein>
<name>YCIB_ECOLI</name>
<dbReference type="EMBL" id="X13583">
    <property type="protein sequence ID" value="CAA31924.1"/>
    <property type="molecule type" value="Genomic_DNA"/>
</dbReference>
<dbReference type="EMBL" id="U24195">
    <property type="protein sequence ID" value="AAB60067.1"/>
    <property type="molecule type" value="Genomic_DNA"/>
</dbReference>
<dbReference type="EMBL" id="U24196">
    <property type="protein sequence ID" value="AAB60075.1"/>
    <property type="molecule type" value="Genomic_DNA"/>
</dbReference>
<dbReference type="EMBL" id="U24197">
    <property type="protein sequence ID" value="AAB60083.1"/>
    <property type="molecule type" value="Genomic_DNA"/>
</dbReference>
<dbReference type="EMBL" id="U24198">
    <property type="protein sequence ID" value="AAB60091.1"/>
    <property type="molecule type" value="Genomic_DNA"/>
</dbReference>
<dbReference type="EMBL" id="U24199">
    <property type="protein sequence ID" value="AAB60099.1"/>
    <property type="molecule type" value="Genomic_DNA"/>
</dbReference>
<dbReference type="EMBL" id="U24200">
    <property type="protein sequence ID" value="AAB60107.1"/>
    <property type="molecule type" value="Genomic_DNA"/>
</dbReference>
<dbReference type="EMBL" id="U24201">
    <property type="protein sequence ID" value="AAB60115.1"/>
    <property type="molecule type" value="Genomic_DNA"/>
</dbReference>
<dbReference type="EMBL" id="U24202">
    <property type="protein sequence ID" value="AAB60123.1"/>
    <property type="molecule type" value="Genomic_DNA"/>
</dbReference>
<dbReference type="EMBL" id="U24203">
    <property type="protein sequence ID" value="AAB60131.1"/>
    <property type="molecule type" value="Genomic_DNA"/>
</dbReference>
<dbReference type="EMBL" id="U24204">
    <property type="protein sequence ID" value="AAB60139.1"/>
    <property type="molecule type" value="Genomic_DNA"/>
</dbReference>
<dbReference type="EMBL" id="U24205">
    <property type="protein sequence ID" value="AAB60147.1"/>
    <property type="molecule type" value="Genomic_DNA"/>
</dbReference>
<dbReference type="EMBL" id="U24206">
    <property type="protein sequence ID" value="AAB60155.1"/>
    <property type="molecule type" value="Genomic_DNA"/>
</dbReference>
<dbReference type="EMBL" id="U00096">
    <property type="protein sequence ID" value="AAC74336.1"/>
    <property type="molecule type" value="Genomic_DNA"/>
</dbReference>
<dbReference type="EMBL" id="AP009048">
    <property type="protein sequence ID" value="BAA14786.1"/>
    <property type="molecule type" value="Genomic_DNA"/>
</dbReference>
<dbReference type="PIR" id="S07799">
    <property type="entry name" value="S07799"/>
</dbReference>
<dbReference type="PIR" id="T45503">
    <property type="entry name" value="T45503"/>
</dbReference>
<dbReference type="RefSeq" id="NP_415770.1">
    <property type="nucleotide sequence ID" value="NC_000913.3"/>
</dbReference>
<dbReference type="RefSeq" id="WP_000808667.1">
    <property type="nucleotide sequence ID" value="NZ_STEB01000005.1"/>
</dbReference>
<dbReference type="BioGRID" id="4262998">
    <property type="interactions" value="140"/>
</dbReference>
<dbReference type="FunCoup" id="P0A710">
    <property type="interactions" value="142"/>
</dbReference>
<dbReference type="STRING" id="511145.b1254"/>
<dbReference type="TCDB" id="9.B.357.1.1">
    <property type="family name" value="the bacterial envelope biogenesis (beb) family"/>
</dbReference>
<dbReference type="PaxDb" id="511145-b1254"/>
<dbReference type="EnsemblBacteria" id="AAC74336">
    <property type="protein sequence ID" value="AAC74336"/>
    <property type="gene ID" value="b1254"/>
</dbReference>
<dbReference type="GeneID" id="946228"/>
<dbReference type="KEGG" id="ecj:JW1246"/>
<dbReference type="KEGG" id="eco:b1254"/>
<dbReference type="KEGG" id="ecoc:C3026_07365"/>
<dbReference type="PATRIC" id="fig|1411691.4.peg.1029"/>
<dbReference type="EchoBASE" id="EB1112"/>
<dbReference type="eggNOG" id="COG2917">
    <property type="taxonomic scope" value="Bacteria"/>
</dbReference>
<dbReference type="HOGENOM" id="CLU_089554_2_0_6"/>
<dbReference type="InParanoid" id="P0A710"/>
<dbReference type="OMA" id="VWRTQST"/>
<dbReference type="OrthoDB" id="9788219at2"/>
<dbReference type="PhylomeDB" id="P0A710"/>
<dbReference type="BioCyc" id="EcoCyc:EG11122-MONOMER"/>
<dbReference type="PRO" id="PR:P0A710"/>
<dbReference type="Proteomes" id="UP000000625">
    <property type="component" value="Chromosome"/>
</dbReference>
<dbReference type="GO" id="GO:0005886">
    <property type="term" value="C:plasma membrane"/>
    <property type="evidence" value="ECO:0000314"/>
    <property type="project" value="EcoCyc"/>
</dbReference>
<dbReference type="HAMAP" id="MF_00189">
    <property type="entry name" value="YciB"/>
    <property type="match status" value="1"/>
</dbReference>
<dbReference type="InterPro" id="IPR006008">
    <property type="entry name" value="YciB"/>
</dbReference>
<dbReference type="NCBIfam" id="TIGR00997">
    <property type="entry name" value="ispZ"/>
    <property type="match status" value="1"/>
</dbReference>
<dbReference type="NCBIfam" id="NF001324">
    <property type="entry name" value="PRK00259.1-2"/>
    <property type="match status" value="1"/>
</dbReference>
<dbReference type="NCBIfam" id="NF001325">
    <property type="entry name" value="PRK00259.1-3"/>
    <property type="match status" value="1"/>
</dbReference>
<dbReference type="NCBIfam" id="NF001326">
    <property type="entry name" value="PRK00259.1-4"/>
    <property type="match status" value="1"/>
</dbReference>
<dbReference type="PANTHER" id="PTHR36917:SF1">
    <property type="entry name" value="INNER MEMBRANE-SPANNING PROTEIN YCIB"/>
    <property type="match status" value="1"/>
</dbReference>
<dbReference type="PANTHER" id="PTHR36917">
    <property type="entry name" value="INTRACELLULAR SEPTATION PROTEIN A-RELATED"/>
    <property type="match status" value="1"/>
</dbReference>
<dbReference type="Pfam" id="PF04279">
    <property type="entry name" value="IspA"/>
    <property type="match status" value="1"/>
</dbReference>
<organism>
    <name type="scientific">Escherichia coli (strain K12)</name>
    <dbReference type="NCBI Taxonomy" id="83333"/>
    <lineage>
        <taxon>Bacteria</taxon>
        <taxon>Pseudomonadati</taxon>
        <taxon>Pseudomonadota</taxon>
        <taxon>Gammaproteobacteria</taxon>
        <taxon>Enterobacterales</taxon>
        <taxon>Enterobacteriaceae</taxon>
        <taxon>Escherichia</taxon>
    </lineage>
</organism>
<gene>
    <name evidence="1" type="primary">yciB</name>
    <name type="synonym">ispZ</name>
    <name type="ordered locus">b1254</name>
    <name type="ordered locus">JW1246</name>
</gene>
<keyword id="KW-0997">Cell inner membrane</keyword>
<keyword id="KW-1003">Cell membrane</keyword>
<keyword id="KW-0472">Membrane</keyword>
<keyword id="KW-1185">Reference proteome</keyword>
<keyword id="KW-0812">Transmembrane</keyword>
<keyword id="KW-1133">Transmembrane helix</keyword>
<accession>P0A710</accession>
<accession>P21366</accession>
<accession>P94721</accession>
<accession>P94725</accession>
<accession>P94735</accession>
<accession>P94738</accession>
<feature type="chain" id="PRO_0000206531" description="Inner membrane-spanning protein YciB">
    <location>
        <begin position="1"/>
        <end position="179"/>
    </location>
</feature>
<feature type="topological domain" description="Periplasmic" evidence="9">
    <location>
        <begin position="1"/>
        <end position="21"/>
    </location>
</feature>
<feature type="transmembrane region" description="Helical" evidence="1">
    <location>
        <begin position="22"/>
        <end position="42"/>
    </location>
</feature>
<feature type="topological domain" description="Cytoplasmic" evidence="9">
    <location>
        <begin position="43"/>
        <end position="49"/>
    </location>
</feature>
<feature type="transmembrane region" description="Helical" evidence="1">
    <location>
        <begin position="50"/>
        <end position="70"/>
    </location>
</feature>
<feature type="topological domain" description="Periplasmic" evidence="9">
    <location>
        <begin position="71"/>
        <end position="75"/>
    </location>
</feature>
<feature type="transmembrane region" description="Helical" evidence="1">
    <location>
        <begin position="76"/>
        <end position="96"/>
    </location>
</feature>
<feature type="topological domain" description="Cytoplasmic" evidence="9">
    <location>
        <begin position="97"/>
        <end position="120"/>
    </location>
</feature>
<feature type="transmembrane region" description="Helical" evidence="1">
    <location>
        <begin position="121"/>
        <end position="141"/>
    </location>
</feature>
<feature type="topological domain" description="Periplasmic" evidence="9">
    <location>
        <begin position="142"/>
        <end position="148"/>
    </location>
</feature>
<feature type="transmembrane region" description="Helical" evidence="1">
    <location>
        <begin position="149"/>
        <end position="169"/>
    </location>
</feature>
<feature type="topological domain" description="Cytoplasmic" evidence="2 5">
    <location>
        <begin position="170"/>
        <end position="179"/>
    </location>
</feature>
<feature type="sequence variant" description="In strain: ECOR 31.">
    <original>P</original>
    <variation>Q</variation>
    <location>
        <position position="99"/>
    </location>
</feature>
<feature type="sequence variant" description="In strain: ECOR 28.">
    <original>T</original>
    <variation>M</variation>
    <location>
        <position position="110"/>
    </location>
</feature>
<feature type="sequence variant" description="In strain: ECOR 60.">
    <original>L</original>
    <variation>V</variation>
    <location>
        <position position="111"/>
    </location>
</feature>
<feature type="sequence variant" description="In strain: ECOR 52.">
    <original>P</original>
    <variation>S</variation>
    <location>
        <position position="114"/>
    </location>
</feature>
<feature type="sequence variant" description="In strain: ECOR 28.">
    <original>S</original>
    <variation>L</variation>
    <location>
        <position position="117"/>
    </location>
</feature>
<reference key="1">
    <citation type="journal article" date="1988" name="Genetics">
        <title>Molecular evolution of the Escherichia coli chromosome. I. Analysis of structure and natural variation in a previously uncharacterized region between trp and tonB.</title>
        <authorList>
            <person name="Stoltzfus A."/>
            <person name="Leslie J.F."/>
            <person name="Milkman R."/>
        </authorList>
    </citation>
    <scope>NUCLEOTIDE SEQUENCE [GENOMIC DNA]</scope>
    <source>
        <strain>K12</strain>
    </source>
</reference>
<reference key="2">
    <citation type="submission" date="1995-04" db="EMBL/GenBank/DDBJ databases">
        <authorList>
            <person name="Milkman R."/>
        </authorList>
    </citation>
    <scope>NUCLEOTIDE SEQUENCE [GENOMIC DNA]</scope>
    <source>
        <strain>K12</strain>
        <strain>Various ECOR strains</strain>
    </source>
</reference>
<reference key="3">
    <citation type="journal article" date="1996" name="DNA Res.">
        <title>A 570-kb DNA sequence of the Escherichia coli K-12 genome corresponding to the 28.0-40.1 min region on the linkage map.</title>
        <authorList>
            <person name="Aiba H."/>
            <person name="Baba T."/>
            <person name="Fujita K."/>
            <person name="Hayashi K."/>
            <person name="Inada T."/>
            <person name="Isono K."/>
            <person name="Itoh T."/>
            <person name="Kasai H."/>
            <person name="Kashimoto K."/>
            <person name="Kimura S."/>
            <person name="Kitakawa M."/>
            <person name="Kitagawa M."/>
            <person name="Makino K."/>
            <person name="Miki T."/>
            <person name="Mizobuchi K."/>
            <person name="Mori H."/>
            <person name="Mori T."/>
            <person name="Motomura K."/>
            <person name="Nakade S."/>
            <person name="Nakamura Y."/>
            <person name="Nashimoto H."/>
            <person name="Nishio Y."/>
            <person name="Oshima T."/>
            <person name="Saito N."/>
            <person name="Sampei G."/>
            <person name="Seki Y."/>
            <person name="Sivasundaram S."/>
            <person name="Tagami H."/>
            <person name="Takeda J."/>
            <person name="Takemoto K."/>
            <person name="Takeuchi Y."/>
            <person name="Wada C."/>
            <person name="Yamamoto Y."/>
            <person name="Horiuchi T."/>
        </authorList>
    </citation>
    <scope>NUCLEOTIDE SEQUENCE [LARGE SCALE GENOMIC DNA]</scope>
    <source>
        <strain>K12 / W3110 / ATCC 27325 / DSM 5911</strain>
    </source>
</reference>
<reference key="4">
    <citation type="journal article" date="1997" name="Science">
        <title>The complete genome sequence of Escherichia coli K-12.</title>
        <authorList>
            <person name="Blattner F.R."/>
            <person name="Plunkett G. III"/>
            <person name="Bloch C.A."/>
            <person name="Perna N.T."/>
            <person name="Burland V."/>
            <person name="Riley M."/>
            <person name="Collado-Vides J."/>
            <person name="Glasner J.D."/>
            <person name="Rode C.K."/>
            <person name="Mayhew G.F."/>
            <person name="Gregor J."/>
            <person name="Davis N.W."/>
            <person name="Kirkpatrick H.A."/>
            <person name="Goeden M.A."/>
            <person name="Rose D.J."/>
            <person name="Mau B."/>
            <person name="Shao Y."/>
        </authorList>
    </citation>
    <scope>NUCLEOTIDE SEQUENCE [LARGE SCALE GENOMIC DNA]</scope>
    <source>
        <strain>K12 / MG1655 / ATCC 47076</strain>
    </source>
</reference>
<reference key="5">
    <citation type="journal article" date="2006" name="Mol. Syst. Biol.">
        <title>Highly accurate genome sequences of Escherichia coli K-12 strains MG1655 and W3110.</title>
        <authorList>
            <person name="Hayashi K."/>
            <person name="Morooka N."/>
            <person name="Yamamoto Y."/>
            <person name="Fujita K."/>
            <person name="Isono K."/>
            <person name="Choi S."/>
            <person name="Ohtsubo E."/>
            <person name="Baba T."/>
            <person name="Wanner B.L."/>
            <person name="Mori H."/>
            <person name="Horiuchi T."/>
        </authorList>
    </citation>
    <scope>NUCLEOTIDE SEQUENCE [LARGE SCALE GENOMIC DNA]</scope>
    <source>
        <strain>K12 / W3110 / ATCC 27325 / DSM 5911</strain>
    </source>
</reference>
<reference key="6">
    <citation type="journal article" date="2005" name="Science">
        <title>Global topology analysis of the Escherichia coli inner membrane proteome.</title>
        <authorList>
            <person name="Daley D.O."/>
            <person name="Rapp M."/>
            <person name="Granseth E."/>
            <person name="Melen K."/>
            <person name="Drew D."/>
            <person name="von Heijne G."/>
        </authorList>
    </citation>
    <scope>TOPOLOGY [LARGE SCALE ANALYSIS]</scope>
    <scope>SUBCELLULAR LOCATION</scope>
    <source>
        <strain>K12 / MG1655 / ATCC 47076</strain>
    </source>
</reference>
<reference key="7">
    <citation type="journal article" date="2015" name="Proc. Natl. Acad. Sci. U.S.A.">
        <title>Contact-dependent growth inhibition toxins exploit multiple independent cell-entry pathways.</title>
        <authorList>
            <person name="Willett J.L."/>
            <person name="Gucinski G.C."/>
            <person name="Fatherree J.P."/>
            <person name="Low D.A."/>
            <person name="Hayes C.S."/>
        </authorList>
    </citation>
    <scope>RECEPTOR FOR CDI TOXIN ENTRY INTO TARGET CELL CYTOPLASM (MICROBIAL INFECTION)</scope>
    <scope>DISRUPTION PHENOTYPE</scope>
    <source>
        <strain>K12 / MC4100 / ATCC 35695 / DSM 6574</strain>
    </source>
</reference>
<reference key="8">
    <citation type="journal article" date="2015" name="Genes Cells">
        <title>Escherichia coli inner membrane protein YciB interacts with ZipA that is important for cell division.</title>
        <authorList>
            <person name="Badaluddin N.A."/>
            <person name="Kitakawa M."/>
        </authorList>
    </citation>
    <scope>FUNCTION</scope>
    <scope>INTERACTION WITH ZIPA</scope>
    <scope>SUBCELLULAR LOCATION</scope>
    <scope>DISRUPTION PHENOTYPE</scope>
    <source>
        <strain>K12 / BW25113</strain>
    </source>
</reference>
<reference key="9">
    <citation type="journal article" date="2015" name="Microbiol. Immunol.">
        <title>Characterization of inner membrane protein YciB in Escherichia coli: YciB interacts with cell elongation and division proteins.</title>
        <authorList>
            <person name="Li G."/>
            <person name="Badaluddin N.A."/>
            <person name="Kitakawa M."/>
        </authorList>
    </citation>
    <scope>FUNCTION</scope>
    <scope>INTERACTION WITH CELL ELONGATION AND CELL DIVISION PROTEINS</scope>
    <scope>SUBCELLULAR LOCATION</scope>
    <scope>TOPOLOGY</scope>
    <scope>DISRUPTION PHENOTYPE</scope>
    <source>
        <strain>K12 / BW25113</strain>
    </source>
</reference>
<reference key="10">
    <citation type="journal article" date="2019" name="Mol. Microbiol.">
        <title>A synergistic role for two predicted inner membrane proteins of Escherichia coli in cell envelope integrity.</title>
        <authorList>
            <person name="Mychack A."/>
            <person name="Amrutha R.N."/>
            <person name="Chung C."/>
            <person name="Cardenas Arevalo K."/>
            <person name="Reddy M."/>
            <person name="Janakiraman A."/>
        </authorList>
    </citation>
    <scope>FUNCTION</scope>
    <scope>DISRUPTION PHENOTYPE</scope>
</reference>
<reference key="11">
    <citation type="journal article" date="2021" name="J. Bacteriol.">
        <title>Defects in the first step of lipoprotein maturation underlie the synthetic lethality of Escherichia coli lacking the inner membrane proteins YciB and DcrB.</title>
        <authorList>
            <person name="Mychack A."/>
            <person name="Janakiraman A."/>
        </authorList>
    </citation>
    <scope>FUNCTION</scope>
    <scope>DISRUPTION PHENOTYPE</scope>
</reference>
<evidence type="ECO:0000255" key="1">
    <source>
        <dbReference type="HAMAP-Rule" id="MF_00189"/>
    </source>
</evidence>
<evidence type="ECO:0000269" key="2">
    <source>
    </source>
</evidence>
<evidence type="ECO:0000269" key="3">
    <source>
    </source>
</evidence>
<evidence type="ECO:0000269" key="4">
    <source>
    </source>
</evidence>
<evidence type="ECO:0000269" key="5">
    <source>
    </source>
</evidence>
<evidence type="ECO:0000269" key="6">
    <source>
    </source>
</evidence>
<evidence type="ECO:0000269" key="7">
    <source>
    </source>
</evidence>
<evidence type="ECO:0000303" key="8">
    <source>
    </source>
</evidence>
<evidence type="ECO:0000305" key="9"/>
<evidence type="ECO:0000305" key="10">
    <source>
    </source>
</evidence>
<proteinExistence type="evidence at protein level"/>
<sequence>MKQFLDFLPLVVFFAFYKIYDIYAATAALIVATAIVLIYSWVRFRKVEKMALITFVLVVVFGGLTLFFHNDEFIKWKVTVIYALFAGALLVSQWVMKKPLIQRMLGKELTLPQPVWSKLNLAWAVFFILCGLANIYIAFWLPQNIWVNFKVFGLTALTLIFTLLSGIYIYRHMPQEDKS</sequence>
<comment type="function">
    <text evidence="4 5 6 7">Plays a role in cell envelope biogenesis, maintenance of cell envelope integrity and membrane homeostasis (PubMed:26391555, PubMed:26454142, PubMed:30368949, PubMed:33431434). Required for the normal cell elongation (PubMed:26391555). May participate in the cell division process (PubMed:26391555). Important for the septum site localization of the essential divisome protein ZipA (PubMed:26391555).</text>
</comment>
<comment type="function">
    <text evidence="3">(Microbial infection) Probably transports the toxic C-terminal region of CdiA from E.coli strain 869 across the inner membrane to the cytoplasm, where CdiA degrades DNA. Toxin transport is strain-specific, mutations in this gene do not confer resistance to several other tested CdiA toxins.</text>
</comment>
<comment type="subunit">
    <text evidence="4 5">Interact with various proteins involved in cell elongation and cell division (PubMed:26454142). Directly interacts with ZipA (PubMed:26391555).</text>
</comment>
<comment type="subcellular location">
    <subcellularLocation>
        <location evidence="1 2 4 5">Cell inner membrane</location>
        <topology evidence="1 5 10">Multi-pass membrane protein</topology>
    </subcellularLocation>
    <text evidence="4">Distributed in the inner membrane through the whole cell.</text>
</comment>
<comment type="disruption phenotype">
    <text evidence="3 4 5 6 7">Deletion mutant is shorter than wild type and shows abnormal localization of ZipA, an essential protein of cell division (PubMed:26391555). Deletion mutant is sensitive to low osmolarity (PubMed:26454142). Disruption confers resistance to cellular contact-dependent growth inhibition (CDI) CdiA of E.coli strain 869, but not to a series of other CdiA toxins tested (PubMed:26305955). Cells lacking both yciB and dcrB display pleiotropic defects, including morphological changes, elevated amounts of lipopolysaccharide, membrane vesiculation, reduced proton motive force, accumulation of outer membrane proteins at the inner membrane, and dynamic shrinking and extension of the cytoplasmic membrane accompanied by lysis and cell death (PubMed:30368949). Double mutant also displays a reduction in membrane fluidity and a marked sensitivity to copper ions (PubMed:33431434). It accumulates additional forms of Lpp and shows aberrant localization of Lpp due to inefficient lipid modification at the first step in lipoprotein maturation (PubMed:33431434).</text>
</comment>
<comment type="similarity">
    <text evidence="1">Belongs to the YciB family.</text>
</comment>